<evidence type="ECO:0000250" key="1"/>
<evidence type="ECO:0000255" key="2"/>
<evidence type="ECO:0000305" key="3"/>
<sequence length="384" mass="41723">MEGVSATMHKLRPYLLMIFLQFGAAGTYIVIMATLNQGQNRYVVIVYRNLVAALVLAPFALIFERKVRPKMTLSVLWKIMALGFLEPVLDQGFGYLGMNMTSATYTSAIMNILPSVTFIIAWILRMEKVNIAEVRSKAKIIGTLVGLGGALVMTLYKGPLIPLPWSNPNMDQQNGHTNNSQDHNNWVVGTLLILLGCVAWSGFYVLQSITIKTYPADLSLSALICLAGAVQSFAVALVVERHPSGWAVGWDARLFAPLYTGIVSSGITYYVQGMVMKTRGPVFVTAFNPLCMILVALIASFILHEQIHFGCVIGGAVIAAGLYMVVWGKGKDYEVSGLDILEKNSLQELPITTKSEDDNKLVSSISDNSNVTIPGGAHSNTSGI</sequence>
<protein>
    <recommendedName>
        <fullName>WAT1-related protein At4g08290</fullName>
    </recommendedName>
</protein>
<gene>
    <name type="ordered locus">At4g08290</name>
    <name type="ORF">T12G13.130</name>
</gene>
<name>WTR31_ARATH</name>
<reference key="1">
    <citation type="journal article" date="1999" name="Nature">
        <title>Sequence and analysis of chromosome 4 of the plant Arabidopsis thaliana.</title>
        <authorList>
            <person name="Mayer K.F.X."/>
            <person name="Schueller C."/>
            <person name="Wambutt R."/>
            <person name="Murphy G."/>
            <person name="Volckaert G."/>
            <person name="Pohl T."/>
            <person name="Duesterhoeft A."/>
            <person name="Stiekema W."/>
            <person name="Entian K.-D."/>
            <person name="Terryn N."/>
            <person name="Harris B."/>
            <person name="Ansorge W."/>
            <person name="Brandt P."/>
            <person name="Grivell L.A."/>
            <person name="Rieger M."/>
            <person name="Weichselgartner M."/>
            <person name="de Simone V."/>
            <person name="Obermaier B."/>
            <person name="Mache R."/>
            <person name="Mueller M."/>
            <person name="Kreis M."/>
            <person name="Delseny M."/>
            <person name="Puigdomenech P."/>
            <person name="Watson M."/>
            <person name="Schmidtheini T."/>
            <person name="Reichert B."/>
            <person name="Portetelle D."/>
            <person name="Perez-Alonso M."/>
            <person name="Boutry M."/>
            <person name="Bancroft I."/>
            <person name="Vos P."/>
            <person name="Hoheisel J."/>
            <person name="Zimmermann W."/>
            <person name="Wedler H."/>
            <person name="Ridley P."/>
            <person name="Langham S.-A."/>
            <person name="McCullagh B."/>
            <person name="Bilham L."/>
            <person name="Robben J."/>
            <person name="van der Schueren J."/>
            <person name="Grymonprez B."/>
            <person name="Chuang Y.-J."/>
            <person name="Vandenbussche F."/>
            <person name="Braeken M."/>
            <person name="Weltjens I."/>
            <person name="Voet M."/>
            <person name="Bastiaens I."/>
            <person name="Aert R."/>
            <person name="Defoor E."/>
            <person name="Weitzenegger T."/>
            <person name="Bothe G."/>
            <person name="Ramsperger U."/>
            <person name="Hilbert H."/>
            <person name="Braun M."/>
            <person name="Holzer E."/>
            <person name="Brandt A."/>
            <person name="Peters S."/>
            <person name="van Staveren M."/>
            <person name="Dirkse W."/>
            <person name="Mooijman P."/>
            <person name="Klein Lankhorst R."/>
            <person name="Rose M."/>
            <person name="Hauf J."/>
            <person name="Koetter P."/>
            <person name="Berneiser S."/>
            <person name="Hempel S."/>
            <person name="Feldpausch M."/>
            <person name="Lamberth S."/>
            <person name="Van den Daele H."/>
            <person name="De Keyser A."/>
            <person name="Buysshaert C."/>
            <person name="Gielen J."/>
            <person name="Villarroel R."/>
            <person name="De Clercq R."/>
            <person name="van Montagu M."/>
            <person name="Rogers J."/>
            <person name="Cronin A."/>
            <person name="Quail M.A."/>
            <person name="Bray-Allen S."/>
            <person name="Clark L."/>
            <person name="Doggett J."/>
            <person name="Hall S."/>
            <person name="Kay M."/>
            <person name="Lennard N."/>
            <person name="McLay K."/>
            <person name="Mayes R."/>
            <person name="Pettett A."/>
            <person name="Rajandream M.A."/>
            <person name="Lyne M."/>
            <person name="Benes V."/>
            <person name="Rechmann S."/>
            <person name="Borkova D."/>
            <person name="Bloecker H."/>
            <person name="Scharfe M."/>
            <person name="Grimm M."/>
            <person name="Loehnert T.-H."/>
            <person name="Dose S."/>
            <person name="de Haan M."/>
            <person name="Maarse A.C."/>
            <person name="Schaefer M."/>
            <person name="Mueller-Auer S."/>
            <person name="Gabel C."/>
            <person name="Fuchs M."/>
            <person name="Fartmann B."/>
            <person name="Granderath K."/>
            <person name="Dauner D."/>
            <person name="Herzl A."/>
            <person name="Neumann S."/>
            <person name="Argiriou A."/>
            <person name="Vitale D."/>
            <person name="Liguori R."/>
            <person name="Piravandi E."/>
            <person name="Massenet O."/>
            <person name="Quigley F."/>
            <person name="Clabauld G."/>
            <person name="Muendlein A."/>
            <person name="Felber R."/>
            <person name="Schnabl S."/>
            <person name="Hiller R."/>
            <person name="Schmidt W."/>
            <person name="Lecharny A."/>
            <person name="Aubourg S."/>
            <person name="Chefdor F."/>
            <person name="Cooke R."/>
            <person name="Berger C."/>
            <person name="Monfort A."/>
            <person name="Casacuberta E."/>
            <person name="Gibbons T."/>
            <person name="Weber N."/>
            <person name="Vandenbol M."/>
            <person name="Bargues M."/>
            <person name="Terol J."/>
            <person name="Torres A."/>
            <person name="Perez-Perez A."/>
            <person name="Purnelle B."/>
            <person name="Bent E."/>
            <person name="Johnson S."/>
            <person name="Tacon D."/>
            <person name="Jesse T."/>
            <person name="Heijnen L."/>
            <person name="Schwarz S."/>
            <person name="Scholler P."/>
            <person name="Heber S."/>
            <person name="Francs P."/>
            <person name="Bielke C."/>
            <person name="Frishman D."/>
            <person name="Haase D."/>
            <person name="Lemcke K."/>
            <person name="Mewes H.-W."/>
            <person name="Stocker S."/>
            <person name="Zaccaria P."/>
            <person name="Bevan M."/>
            <person name="Wilson R.K."/>
            <person name="de la Bastide M."/>
            <person name="Habermann K."/>
            <person name="Parnell L."/>
            <person name="Dedhia N."/>
            <person name="Gnoj L."/>
            <person name="Schutz K."/>
            <person name="Huang E."/>
            <person name="Spiegel L."/>
            <person name="Sekhon M."/>
            <person name="Murray J."/>
            <person name="Sheet P."/>
            <person name="Cordes M."/>
            <person name="Abu-Threideh J."/>
            <person name="Stoneking T."/>
            <person name="Kalicki J."/>
            <person name="Graves T."/>
            <person name="Harmon G."/>
            <person name="Edwards J."/>
            <person name="Latreille P."/>
            <person name="Courtney L."/>
            <person name="Cloud J."/>
            <person name="Abbott A."/>
            <person name="Scott K."/>
            <person name="Johnson D."/>
            <person name="Minx P."/>
            <person name="Bentley D."/>
            <person name="Fulton B."/>
            <person name="Miller N."/>
            <person name="Greco T."/>
            <person name="Kemp K."/>
            <person name="Kramer J."/>
            <person name="Fulton L."/>
            <person name="Mardis E."/>
            <person name="Dante M."/>
            <person name="Pepin K."/>
            <person name="Hillier L.W."/>
            <person name="Nelson J."/>
            <person name="Spieth J."/>
            <person name="Ryan E."/>
            <person name="Andrews S."/>
            <person name="Geisel C."/>
            <person name="Layman D."/>
            <person name="Du H."/>
            <person name="Ali J."/>
            <person name="Berghoff A."/>
            <person name="Jones K."/>
            <person name="Drone K."/>
            <person name="Cotton M."/>
            <person name="Joshu C."/>
            <person name="Antonoiu B."/>
            <person name="Zidanic M."/>
            <person name="Strong C."/>
            <person name="Sun H."/>
            <person name="Lamar B."/>
            <person name="Yordan C."/>
            <person name="Ma P."/>
            <person name="Zhong J."/>
            <person name="Preston R."/>
            <person name="Vil D."/>
            <person name="Shekher M."/>
            <person name="Matero A."/>
            <person name="Shah R."/>
            <person name="Swaby I.K."/>
            <person name="O'Shaughnessy A."/>
            <person name="Rodriguez M."/>
            <person name="Hoffman J."/>
            <person name="Till S."/>
            <person name="Granat S."/>
            <person name="Shohdy N."/>
            <person name="Hasegawa A."/>
            <person name="Hameed A."/>
            <person name="Lodhi M."/>
            <person name="Johnson A."/>
            <person name="Chen E."/>
            <person name="Marra M.A."/>
            <person name="Martienssen R."/>
            <person name="McCombie W.R."/>
        </authorList>
    </citation>
    <scope>NUCLEOTIDE SEQUENCE [LARGE SCALE GENOMIC DNA]</scope>
    <source>
        <strain>cv. Columbia</strain>
    </source>
</reference>
<reference key="2">
    <citation type="journal article" date="2017" name="Plant J.">
        <title>Araport11: a complete reannotation of the Arabidopsis thaliana reference genome.</title>
        <authorList>
            <person name="Cheng C.Y."/>
            <person name="Krishnakumar V."/>
            <person name="Chan A.P."/>
            <person name="Thibaud-Nissen F."/>
            <person name="Schobel S."/>
            <person name="Town C.D."/>
        </authorList>
    </citation>
    <scope>GENOME REANNOTATION</scope>
    <source>
        <strain>cv. Columbia</strain>
    </source>
</reference>
<reference key="3">
    <citation type="journal article" date="2002" name="Science">
        <title>Functional annotation of a full-length Arabidopsis cDNA collection.</title>
        <authorList>
            <person name="Seki M."/>
            <person name="Narusaka M."/>
            <person name="Kamiya A."/>
            <person name="Ishida J."/>
            <person name="Satou M."/>
            <person name="Sakurai T."/>
            <person name="Nakajima M."/>
            <person name="Enju A."/>
            <person name="Akiyama K."/>
            <person name="Oono Y."/>
            <person name="Muramatsu M."/>
            <person name="Hayashizaki Y."/>
            <person name="Kawai J."/>
            <person name="Carninci P."/>
            <person name="Itoh M."/>
            <person name="Ishii Y."/>
            <person name="Arakawa T."/>
            <person name="Shibata K."/>
            <person name="Shinagawa A."/>
            <person name="Shinozaki K."/>
        </authorList>
    </citation>
    <scope>NUCLEOTIDE SEQUENCE [LARGE SCALE MRNA] (ISOFORM 1)</scope>
    <source>
        <strain>cv. Columbia</strain>
    </source>
</reference>
<reference key="4">
    <citation type="journal article" date="2003" name="Science">
        <title>Empirical analysis of transcriptional activity in the Arabidopsis genome.</title>
        <authorList>
            <person name="Yamada K."/>
            <person name="Lim J."/>
            <person name="Dale J.M."/>
            <person name="Chen H."/>
            <person name="Shinn P."/>
            <person name="Palm C.J."/>
            <person name="Southwick A.M."/>
            <person name="Wu H.C."/>
            <person name="Kim C.J."/>
            <person name="Nguyen M."/>
            <person name="Pham P.K."/>
            <person name="Cheuk R.F."/>
            <person name="Karlin-Newmann G."/>
            <person name="Liu S.X."/>
            <person name="Lam B."/>
            <person name="Sakano H."/>
            <person name="Wu T."/>
            <person name="Yu G."/>
            <person name="Miranda M."/>
            <person name="Quach H.L."/>
            <person name="Tripp M."/>
            <person name="Chang C.H."/>
            <person name="Lee J.M."/>
            <person name="Toriumi M.J."/>
            <person name="Chan M.M."/>
            <person name="Tang C.C."/>
            <person name="Onodera C.S."/>
            <person name="Deng J.M."/>
            <person name="Akiyama K."/>
            <person name="Ansari Y."/>
            <person name="Arakawa T."/>
            <person name="Banh J."/>
            <person name="Banno F."/>
            <person name="Bowser L."/>
            <person name="Brooks S.Y."/>
            <person name="Carninci P."/>
            <person name="Chao Q."/>
            <person name="Choy N."/>
            <person name="Enju A."/>
            <person name="Goldsmith A.D."/>
            <person name="Gurjal M."/>
            <person name="Hansen N.F."/>
            <person name="Hayashizaki Y."/>
            <person name="Johnson-Hopson C."/>
            <person name="Hsuan V.W."/>
            <person name="Iida K."/>
            <person name="Karnes M."/>
            <person name="Khan S."/>
            <person name="Koesema E."/>
            <person name="Ishida J."/>
            <person name="Jiang P.X."/>
            <person name="Jones T."/>
            <person name="Kawai J."/>
            <person name="Kamiya A."/>
            <person name="Meyers C."/>
            <person name="Nakajima M."/>
            <person name="Narusaka M."/>
            <person name="Seki M."/>
            <person name="Sakurai T."/>
            <person name="Satou M."/>
            <person name="Tamse R."/>
            <person name="Vaysberg M."/>
            <person name="Wallender E.K."/>
            <person name="Wong C."/>
            <person name="Yamamura Y."/>
            <person name="Yuan S."/>
            <person name="Shinozaki K."/>
            <person name="Davis R.W."/>
            <person name="Theologis A."/>
            <person name="Ecker J.R."/>
        </authorList>
    </citation>
    <scope>NUCLEOTIDE SEQUENCE [LARGE SCALE MRNA] (ISOFORM 1)</scope>
    <source>
        <strain>cv. Columbia</strain>
    </source>
</reference>
<reference key="5">
    <citation type="submission" date="2002-03" db="EMBL/GenBank/DDBJ databases">
        <title>Full-length cDNA from Arabidopsis thaliana.</title>
        <authorList>
            <person name="Brover V.V."/>
            <person name="Troukhan M.E."/>
            <person name="Alexandrov N.A."/>
            <person name="Lu Y.-P."/>
            <person name="Flavell R.B."/>
            <person name="Feldmann K.A."/>
        </authorList>
    </citation>
    <scope>NUCLEOTIDE SEQUENCE [LARGE SCALE MRNA] (ISOFORM 1)</scope>
</reference>
<keyword id="KW-0025">Alternative splicing</keyword>
<keyword id="KW-0472">Membrane</keyword>
<keyword id="KW-1185">Reference proteome</keyword>
<keyword id="KW-0677">Repeat</keyword>
<keyword id="KW-0812">Transmembrane</keyword>
<keyword id="KW-1133">Transmembrane helix</keyword>
<accession>Q9SUF1</accession>
<accession>F4JG00</accession>
<accession>Q8GWV8</accession>
<accession>Q8LA54</accession>
<organism>
    <name type="scientific">Arabidopsis thaliana</name>
    <name type="common">Mouse-ear cress</name>
    <dbReference type="NCBI Taxonomy" id="3702"/>
    <lineage>
        <taxon>Eukaryota</taxon>
        <taxon>Viridiplantae</taxon>
        <taxon>Streptophyta</taxon>
        <taxon>Embryophyta</taxon>
        <taxon>Tracheophyta</taxon>
        <taxon>Spermatophyta</taxon>
        <taxon>Magnoliopsida</taxon>
        <taxon>eudicotyledons</taxon>
        <taxon>Gunneridae</taxon>
        <taxon>Pentapetalae</taxon>
        <taxon>rosids</taxon>
        <taxon>malvids</taxon>
        <taxon>Brassicales</taxon>
        <taxon>Brassicaceae</taxon>
        <taxon>Camelineae</taxon>
        <taxon>Arabidopsis</taxon>
    </lineage>
</organism>
<feature type="chain" id="PRO_0000421339" description="WAT1-related protein At4g08290">
    <location>
        <begin position="1"/>
        <end position="384"/>
    </location>
</feature>
<feature type="transmembrane region" description="Helical" evidence="2">
    <location>
        <begin position="15"/>
        <end position="35"/>
    </location>
</feature>
<feature type="transmembrane region" description="Helical" evidence="2">
    <location>
        <begin position="43"/>
        <end position="63"/>
    </location>
</feature>
<feature type="transmembrane region" description="Helical" evidence="2">
    <location>
        <begin position="73"/>
        <end position="93"/>
    </location>
</feature>
<feature type="transmembrane region" description="Helical" evidence="2">
    <location>
        <begin position="104"/>
        <end position="124"/>
    </location>
</feature>
<feature type="transmembrane region" description="Helical" evidence="2">
    <location>
        <begin position="140"/>
        <end position="160"/>
    </location>
</feature>
<feature type="transmembrane region" description="Helical" evidence="2">
    <location>
        <begin position="186"/>
        <end position="206"/>
    </location>
</feature>
<feature type="transmembrane region" description="Helical" evidence="2">
    <location>
        <begin position="219"/>
        <end position="239"/>
    </location>
</feature>
<feature type="transmembrane region" description="Helical" evidence="2">
    <location>
        <begin position="255"/>
        <end position="275"/>
    </location>
</feature>
<feature type="transmembrane region" description="Helical" evidence="2">
    <location>
        <begin position="282"/>
        <end position="302"/>
    </location>
</feature>
<feature type="transmembrane region" description="Helical" evidence="2">
    <location>
        <begin position="307"/>
        <end position="327"/>
    </location>
</feature>
<feature type="domain" description="EamA 1">
    <location>
        <begin position="25"/>
        <end position="154"/>
    </location>
</feature>
<feature type="domain" description="EamA 2">
    <location>
        <begin position="198"/>
        <end position="326"/>
    </location>
</feature>
<feature type="splice variant" id="VSP_045516" description="In isoform 2." evidence="3">
    <original>GIVSSGITYYVQGMVMKTRGPV</original>
    <variation>VRLYILVLTIINQLRQISTNLI</variation>
    <location>
        <begin position="261"/>
        <end position="282"/>
    </location>
</feature>
<feature type="splice variant" id="VSP_045517" description="In isoform 2." evidence="3">
    <location>
        <begin position="283"/>
        <end position="384"/>
    </location>
</feature>
<feature type="sequence conflict" description="In Ref. 3; BAC43205 and 4; AAO63397." evidence="3" ref="3 4">
    <original>P</original>
    <variation>H</variation>
    <location>
        <position position="58"/>
    </location>
</feature>
<feature type="sequence conflict" description="In Ref. 5; AAM65570." evidence="3" ref="5">
    <original>N</original>
    <variation>S</variation>
    <location>
        <position position="179"/>
    </location>
</feature>
<feature type="sequence conflict" description="In Ref. 5; AAM65570." evidence="3" ref="5">
    <original>I</original>
    <variation>L</variation>
    <location>
        <position position="298"/>
    </location>
</feature>
<comment type="subcellular location">
    <subcellularLocation>
        <location evidence="1">Membrane</location>
        <topology evidence="3">Multi-pass membrane protein</topology>
    </subcellularLocation>
</comment>
<comment type="alternative products">
    <event type="alternative splicing"/>
    <isoform>
        <id>Q9SUF1-1</id>
        <name>1</name>
        <sequence type="displayed"/>
    </isoform>
    <isoform>
        <id>Q9SUF1-2</id>
        <name>2</name>
        <sequence type="described" ref="VSP_045516 VSP_045517"/>
    </isoform>
</comment>
<comment type="similarity">
    <text evidence="3">Belongs to the drug/metabolite transporter (DMT) superfamily. Plant drug/metabolite exporter (P-DME) (TC 2.A.7.4) family.</text>
</comment>
<comment type="sequence caution" evidence="3">
    <conflict type="erroneous initiation">
        <sequence resource="EMBL-CDS" id="AAM65570"/>
    </conflict>
    <text>Truncated N-terminus.</text>
</comment>
<dbReference type="EMBL" id="AL080252">
    <property type="protein sequence ID" value="CAB45799.1"/>
    <property type="molecule type" value="Genomic_DNA"/>
</dbReference>
<dbReference type="EMBL" id="AL161511">
    <property type="protein sequence ID" value="CAB77954.1"/>
    <property type="molecule type" value="Genomic_DNA"/>
</dbReference>
<dbReference type="EMBL" id="CP002687">
    <property type="protein sequence ID" value="AEE82621.1"/>
    <property type="molecule type" value="Genomic_DNA"/>
</dbReference>
<dbReference type="EMBL" id="CP002687">
    <property type="protein sequence ID" value="AEE82622.1"/>
    <property type="molecule type" value="Genomic_DNA"/>
</dbReference>
<dbReference type="EMBL" id="AK118606">
    <property type="protein sequence ID" value="BAC43205.1"/>
    <property type="molecule type" value="mRNA"/>
</dbReference>
<dbReference type="EMBL" id="BT005333">
    <property type="protein sequence ID" value="AAO63397.1"/>
    <property type="molecule type" value="mRNA"/>
</dbReference>
<dbReference type="EMBL" id="AY088024">
    <property type="protein sequence ID" value="AAM65570.1"/>
    <property type="status" value="ALT_INIT"/>
    <property type="molecule type" value="mRNA"/>
</dbReference>
<dbReference type="PIR" id="T10556">
    <property type="entry name" value="T10556"/>
</dbReference>
<dbReference type="RefSeq" id="NP_001319882.1">
    <molecule id="Q9SUF1-2"/>
    <property type="nucleotide sequence ID" value="NM_001340581.1"/>
</dbReference>
<dbReference type="RefSeq" id="NP_192569.1">
    <molecule id="Q9SUF1-1"/>
    <property type="nucleotide sequence ID" value="NM_116898.4"/>
</dbReference>
<dbReference type="SMR" id="Q9SUF1"/>
<dbReference type="STRING" id="3702.Q9SUF1"/>
<dbReference type="iPTMnet" id="Q9SUF1"/>
<dbReference type="PaxDb" id="3702-AT4G08290.1"/>
<dbReference type="ProteomicsDB" id="242694">
    <molecule id="Q9SUF1-1"/>
</dbReference>
<dbReference type="EnsemblPlants" id="AT4G08290.1">
    <molecule id="Q9SUF1-1"/>
    <property type="protein sequence ID" value="AT4G08290.1"/>
    <property type="gene ID" value="AT4G08290"/>
</dbReference>
<dbReference type="EnsemblPlants" id="AT4G08290.2">
    <molecule id="Q9SUF1-2"/>
    <property type="protein sequence ID" value="AT4G08290.2"/>
    <property type="gene ID" value="AT4G08290"/>
</dbReference>
<dbReference type="GeneID" id="826383"/>
<dbReference type="Gramene" id="AT4G08290.1">
    <molecule id="Q9SUF1-1"/>
    <property type="protein sequence ID" value="AT4G08290.1"/>
    <property type="gene ID" value="AT4G08290"/>
</dbReference>
<dbReference type="Gramene" id="AT4G08290.2">
    <molecule id="Q9SUF1-2"/>
    <property type="protein sequence ID" value="AT4G08290.2"/>
    <property type="gene ID" value="AT4G08290"/>
</dbReference>
<dbReference type="KEGG" id="ath:AT4G08290"/>
<dbReference type="Araport" id="AT4G08290"/>
<dbReference type="TAIR" id="AT4G08290">
    <property type="gene designation" value="UMAMIT20"/>
</dbReference>
<dbReference type="eggNOG" id="ENOG502QQ3S">
    <property type="taxonomic scope" value="Eukaryota"/>
</dbReference>
<dbReference type="HOGENOM" id="CLU_025359_1_1_1"/>
<dbReference type="InParanoid" id="Q9SUF1"/>
<dbReference type="OMA" id="LHEQIHF"/>
<dbReference type="PhylomeDB" id="Q9SUF1"/>
<dbReference type="PRO" id="PR:Q9SUF1"/>
<dbReference type="Proteomes" id="UP000006548">
    <property type="component" value="Chromosome 4"/>
</dbReference>
<dbReference type="ExpressionAtlas" id="Q9SUF1">
    <property type="expression patterns" value="baseline and differential"/>
</dbReference>
<dbReference type="GO" id="GO:0016020">
    <property type="term" value="C:membrane"/>
    <property type="evidence" value="ECO:0007669"/>
    <property type="project" value="UniProtKB-SubCell"/>
</dbReference>
<dbReference type="GO" id="GO:0022857">
    <property type="term" value="F:transmembrane transporter activity"/>
    <property type="evidence" value="ECO:0007669"/>
    <property type="project" value="InterPro"/>
</dbReference>
<dbReference type="InterPro" id="IPR000620">
    <property type="entry name" value="EamA_dom"/>
</dbReference>
<dbReference type="InterPro" id="IPR030184">
    <property type="entry name" value="WAT1-related"/>
</dbReference>
<dbReference type="PANTHER" id="PTHR31218">
    <property type="entry name" value="WAT1-RELATED PROTEIN"/>
    <property type="match status" value="1"/>
</dbReference>
<dbReference type="Pfam" id="PF00892">
    <property type="entry name" value="EamA"/>
    <property type="match status" value="2"/>
</dbReference>
<dbReference type="SUPFAM" id="SSF103481">
    <property type="entry name" value="Multidrug resistance efflux transporter EmrE"/>
    <property type="match status" value="2"/>
</dbReference>
<proteinExistence type="evidence at transcript level"/>